<evidence type="ECO:0000255" key="1">
    <source>
        <dbReference type="HAMAP-Rule" id="MF_00083"/>
    </source>
</evidence>
<sequence>MKLIVGLGNPGTEYEKTRHNIGFMAVDKICEKLNISLNEKKFNGIFYRNKDFILAKPLTYMNKSGDFVQALMQYYDISVEDLIVVYDDMDLLIGKAVIRQKGSSGGHNGIKDIIEKLKTENIKRLKVGIGRGDNAINFVLGKFSIADYQIIDKILDGVADALVSCIYNDVRFVMNKFNGSF</sequence>
<feature type="chain" id="PRO_1000092959" description="Peptidyl-tRNA hydrolase">
    <location>
        <begin position="1"/>
        <end position="181"/>
    </location>
</feature>
<feature type="active site" description="Proton acceptor" evidence="1">
    <location>
        <position position="19"/>
    </location>
</feature>
<feature type="binding site" evidence="1">
    <location>
        <position position="14"/>
    </location>
    <ligand>
        <name>tRNA</name>
        <dbReference type="ChEBI" id="CHEBI:17843"/>
    </ligand>
</feature>
<feature type="binding site" evidence="1">
    <location>
        <position position="60"/>
    </location>
    <ligand>
        <name>tRNA</name>
        <dbReference type="ChEBI" id="CHEBI:17843"/>
    </ligand>
</feature>
<feature type="binding site" evidence="1">
    <location>
        <position position="62"/>
    </location>
    <ligand>
        <name>tRNA</name>
        <dbReference type="ChEBI" id="CHEBI:17843"/>
    </ligand>
</feature>
<feature type="binding site" evidence="1">
    <location>
        <position position="108"/>
    </location>
    <ligand>
        <name>tRNA</name>
        <dbReference type="ChEBI" id="CHEBI:17843"/>
    </ligand>
</feature>
<feature type="site" description="Discriminates between blocked and unblocked aminoacyl-tRNA" evidence="1">
    <location>
        <position position="9"/>
    </location>
</feature>
<feature type="site" description="Stabilizes the basic form of H active site to accept a proton" evidence="1">
    <location>
        <position position="87"/>
    </location>
</feature>
<reference key="1">
    <citation type="journal article" date="2008" name="Infect. Immun.">
        <title>Genome of Mycoplasma arthritidis.</title>
        <authorList>
            <person name="Dybvig K."/>
            <person name="Zuhua C."/>
            <person name="Lao P."/>
            <person name="Jordan D.S."/>
            <person name="French C.T."/>
            <person name="Tu A.H."/>
            <person name="Loraine A.E."/>
        </authorList>
    </citation>
    <scope>NUCLEOTIDE SEQUENCE [LARGE SCALE GENOMIC DNA]</scope>
    <source>
        <strain>158L3-1</strain>
    </source>
</reference>
<name>PTH_META1</name>
<gene>
    <name evidence="1" type="primary">pth</name>
    <name type="ordered locus">MARTH_orf853</name>
</gene>
<protein>
    <recommendedName>
        <fullName evidence="1">Peptidyl-tRNA hydrolase</fullName>
        <shortName evidence="1">Pth</shortName>
        <ecNumber evidence="1">3.1.1.29</ecNumber>
    </recommendedName>
</protein>
<dbReference type="EC" id="3.1.1.29" evidence="1"/>
<dbReference type="EMBL" id="CP001047">
    <property type="protein sequence ID" value="ACF07573.1"/>
    <property type="molecule type" value="Genomic_DNA"/>
</dbReference>
<dbReference type="RefSeq" id="WP_012498530.1">
    <property type="nucleotide sequence ID" value="NC_011025.1"/>
</dbReference>
<dbReference type="SMR" id="B3PNH1"/>
<dbReference type="STRING" id="243272.MARTH_orf853"/>
<dbReference type="KEGG" id="mat:MARTH_orf853"/>
<dbReference type="eggNOG" id="COG0193">
    <property type="taxonomic scope" value="Bacteria"/>
</dbReference>
<dbReference type="HOGENOM" id="CLU_062456_4_1_14"/>
<dbReference type="Proteomes" id="UP000008812">
    <property type="component" value="Chromosome"/>
</dbReference>
<dbReference type="GO" id="GO:0005737">
    <property type="term" value="C:cytoplasm"/>
    <property type="evidence" value="ECO:0007669"/>
    <property type="project" value="UniProtKB-SubCell"/>
</dbReference>
<dbReference type="GO" id="GO:0004045">
    <property type="term" value="F:peptidyl-tRNA hydrolase activity"/>
    <property type="evidence" value="ECO:0007669"/>
    <property type="project" value="UniProtKB-UniRule"/>
</dbReference>
<dbReference type="GO" id="GO:0000049">
    <property type="term" value="F:tRNA binding"/>
    <property type="evidence" value="ECO:0007669"/>
    <property type="project" value="UniProtKB-UniRule"/>
</dbReference>
<dbReference type="GO" id="GO:0006515">
    <property type="term" value="P:protein quality control for misfolded or incompletely synthesized proteins"/>
    <property type="evidence" value="ECO:0007669"/>
    <property type="project" value="UniProtKB-UniRule"/>
</dbReference>
<dbReference type="GO" id="GO:0072344">
    <property type="term" value="P:rescue of stalled ribosome"/>
    <property type="evidence" value="ECO:0007669"/>
    <property type="project" value="UniProtKB-UniRule"/>
</dbReference>
<dbReference type="CDD" id="cd00462">
    <property type="entry name" value="PTH"/>
    <property type="match status" value="1"/>
</dbReference>
<dbReference type="FunFam" id="3.40.50.1470:FF:000001">
    <property type="entry name" value="Peptidyl-tRNA hydrolase"/>
    <property type="match status" value="1"/>
</dbReference>
<dbReference type="Gene3D" id="3.40.50.1470">
    <property type="entry name" value="Peptidyl-tRNA hydrolase"/>
    <property type="match status" value="1"/>
</dbReference>
<dbReference type="HAMAP" id="MF_00083">
    <property type="entry name" value="Pept_tRNA_hydro_bact"/>
    <property type="match status" value="1"/>
</dbReference>
<dbReference type="InterPro" id="IPR001328">
    <property type="entry name" value="Pept_tRNA_hydro"/>
</dbReference>
<dbReference type="InterPro" id="IPR018171">
    <property type="entry name" value="Pept_tRNA_hydro_CS"/>
</dbReference>
<dbReference type="InterPro" id="IPR036416">
    <property type="entry name" value="Pept_tRNA_hydro_sf"/>
</dbReference>
<dbReference type="NCBIfam" id="TIGR00447">
    <property type="entry name" value="pth"/>
    <property type="match status" value="1"/>
</dbReference>
<dbReference type="PANTHER" id="PTHR17224">
    <property type="entry name" value="PEPTIDYL-TRNA HYDROLASE"/>
    <property type="match status" value="1"/>
</dbReference>
<dbReference type="PANTHER" id="PTHR17224:SF1">
    <property type="entry name" value="PEPTIDYL-TRNA HYDROLASE"/>
    <property type="match status" value="1"/>
</dbReference>
<dbReference type="Pfam" id="PF01195">
    <property type="entry name" value="Pept_tRNA_hydro"/>
    <property type="match status" value="1"/>
</dbReference>
<dbReference type="SUPFAM" id="SSF53178">
    <property type="entry name" value="Peptidyl-tRNA hydrolase-like"/>
    <property type="match status" value="1"/>
</dbReference>
<dbReference type="PROSITE" id="PS01195">
    <property type="entry name" value="PEPT_TRNA_HYDROL_1"/>
    <property type="match status" value="1"/>
</dbReference>
<dbReference type="PROSITE" id="PS01196">
    <property type="entry name" value="PEPT_TRNA_HYDROL_2"/>
    <property type="match status" value="1"/>
</dbReference>
<accession>B3PNH1</accession>
<keyword id="KW-0963">Cytoplasm</keyword>
<keyword id="KW-0378">Hydrolase</keyword>
<keyword id="KW-1185">Reference proteome</keyword>
<keyword id="KW-0694">RNA-binding</keyword>
<keyword id="KW-0820">tRNA-binding</keyword>
<proteinExistence type="inferred from homology"/>
<organism>
    <name type="scientific">Metamycoplasma arthritidis (strain 158L3-1)</name>
    <name type="common">Mycoplasma arthritidis</name>
    <dbReference type="NCBI Taxonomy" id="243272"/>
    <lineage>
        <taxon>Bacteria</taxon>
        <taxon>Bacillati</taxon>
        <taxon>Mycoplasmatota</taxon>
        <taxon>Mycoplasmoidales</taxon>
        <taxon>Metamycoplasmataceae</taxon>
        <taxon>Metamycoplasma</taxon>
    </lineage>
</organism>
<comment type="function">
    <text evidence="1">Hydrolyzes ribosome-free peptidyl-tRNAs (with 1 or more amino acids incorporated), which drop off the ribosome during protein synthesis, or as a result of ribosome stalling.</text>
</comment>
<comment type="function">
    <text evidence="1">Catalyzes the release of premature peptidyl moieties from peptidyl-tRNA molecules trapped in stalled 50S ribosomal subunits, and thus maintains levels of free tRNAs and 50S ribosomes.</text>
</comment>
<comment type="catalytic activity">
    <reaction evidence="1">
        <text>an N-acyl-L-alpha-aminoacyl-tRNA + H2O = an N-acyl-L-amino acid + a tRNA + H(+)</text>
        <dbReference type="Rhea" id="RHEA:54448"/>
        <dbReference type="Rhea" id="RHEA-COMP:10123"/>
        <dbReference type="Rhea" id="RHEA-COMP:13883"/>
        <dbReference type="ChEBI" id="CHEBI:15377"/>
        <dbReference type="ChEBI" id="CHEBI:15378"/>
        <dbReference type="ChEBI" id="CHEBI:59874"/>
        <dbReference type="ChEBI" id="CHEBI:78442"/>
        <dbReference type="ChEBI" id="CHEBI:138191"/>
        <dbReference type="EC" id="3.1.1.29"/>
    </reaction>
</comment>
<comment type="subunit">
    <text evidence="1">Monomer.</text>
</comment>
<comment type="subcellular location">
    <subcellularLocation>
        <location evidence="1">Cytoplasm</location>
    </subcellularLocation>
</comment>
<comment type="similarity">
    <text evidence="1">Belongs to the PTH family.</text>
</comment>